<name>CLPB_BIFLO</name>
<evidence type="ECO:0000250" key="1"/>
<evidence type="ECO:0000255" key="2">
    <source>
        <dbReference type="PROSITE-ProRule" id="PRU01251"/>
    </source>
</evidence>
<evidence type="ECO:0000256" key="3">
    <source>
        <dbReference type="SAM" id="MobiDB-lite"/>
    </source>
</evidence>
<evidence type="ECO:0000305" key="4"/>
<organism>
    <name type="scientific">Bifidobacterium longum (strain NCC 2705)</name>
    <dbReference type="NCBI Taxonomy" id="206672"/>
    <lineage>
        <taxon>Bacteria</taxon>
        <taxon>Bacillati</taxon>
        <taxon>Actinomycetota</taxon>
        <taxon>Actinomycetes</taxon>
        <taxon>Bifidobacteriales</taxon>
        <taxon>Bifidobacteriaceae</taxon>
        <taxon>Bifidobacterium</taxon>
    </lineage>
</organism>
<proteinExistence type="inferred from homology"/>
<keyword id="KW-0067">ATP-binding</keyword>
<keyword id="KW-0143">Chaperone</keyword>
<keyword id="KW-0175">Coiled coil</keyword>
<keyword id="KW-0963">Cytoplasm</keyword>
<keyword id="KW-0547">Nucleotide-binding</keyword>
<keyword id="KW-1185">Reference proteome</keyword>
<keyword id="KW-0677">Repeat</keyword>
<keyword id="KW-0346">Stress response</keyword>
<dbReference type="EMBL" id="AE014295">
    <property type="protein sequence ID" value="AAN25051.1"/>
    <property type="molecule type" value="Genomic_DNA"/>
</dbReference>
<dbReference type="RefSeq" id="NP_696415.1">
    <property type="nucleotide sequence ID" value="NC_004307.2"/>
</dbReference>
<dbReference type="RefSeq" id="WP_007057489.1">
    <property type="nucleotide sequence ID" value="NC_004307.2"/>
</dbReference>
<dbReference type="SMR" id="Q8G4X4"/>
<dbReference type="STRING" id="206672.BL1250"/>
<dbReference type="EnsemblBacteria" id="AAN25051">
    <property type="protein sequence ID" value="AAN25051"/>
    <property type="gene ID" value="BL1250"/>
</dbReference>
<dbReference type="GeneID" id="69578999"/>
<dbReference type="KEGG" id="blo:BL1250"/>
<dbReference type="PATRIC" id="fig|206672.9.peg.1535"/>
<dbReference type="HOGENOM" id="CLU_005070_4_1_11"/>
<dbReference type="OrthoDB" id="9803641at2"/>
<dbReference type="PhylomeDB" id="Q8G4X4"/>
<dbReference type="Proteomes" id="UP000000439">
    <property type="component" value="Chromosome"/>
</dbReference>
<dbReference type="GO" id="GO:0005737">
    <property type="term" value="C:cytoplasm"/>
    <property type="evidence" value="ECO:0007669"/>
    <property type="project" value="UniProtKB-SubCell"/>
</dbReference>
<dbReference type="GO" id="GO:0005524">
    <property type="term" value="F:ATP binding"/>
    <property type="evidence" value="ECO:0007669"/>
    <property type="project" value="UniProtKB-KW"/>
</dbReference>
<dbReference type="GO" id="GO:0016887">
    <property type="term" value="F:ATP hydrolysis activity"/>
    <property type="evidence" value="ECO:0007669"/>
    <property type="project" value="InterPro"/>
</dbReference>
<dbReference type="GO" id="GO:0034605">
    <property type="term" value="P:cellular response to heat"/>
    <property type="evidence" value="ECO:0007669"/>
    <property type="project" value="TreeGrafter"/>
</dbReference>
<dbReference type="GO" id="GO:0042026">
    <property type="term" value="P:protein refolding"/>
    <property type="evidence" value="ECO:0007669"/>
    <property type="project" value="InterPro"/>
</dbReference>
<dbReference type="CDD" id="cd00009">
    <property type="entry name" value="AAA"/>
    <property type="match status" value="1"/>
</dbReference>
<dbReference type="CDD" id="cd19499">
    <property type="entry name" value="RecA-like_ClpB_Hsp104-like"/>
    <property type="match status" value="1"/>
</dbReference>
<dbReference type="FunFam" id="1.10.8.60:FF:000017">
    <property type="entry name" value="ATP-dependent chaperone ClpB"/>
    <property type="match status" value="1"/>
</dbReference>
<dbReference type="FunFam" id="3.40.50.300:FF:000120">
    <property type="entry name" value="ATP-dependent chaperone ClpB"/>
    <property type="match status" value="1"/>
</dbReference>
<dbReference type="FunFam" id="3.40.50.300:FF:000025">
    <property type="entry name" value="ATP-dependent Clp protease subunit"/>
    <property type="match status" value="1"/>
</dbReference>
<dbReference type="FunFam" id="3.40.50.300:FF:000010">
    <property type="entry name" value="Chaperone clpB 1, putative"/>
    <property type="match status" value="1"/>
</dbReference>
<dbReference type="Gene3D" id="1.10.8.60">
    <property type="match status" value="1"/>
</dbReference>
<dbReference type="Gene3D" id="1.10.1780.10">
    <property type="entry name" value="Clp, N-terminal domain"/>
    <property type="match status" value="1"/>
</dbReference>
<dbReference type="Gene3D" id="3.40.50.300">
    <property type="entry name" value="P-loop containing nucleotide triphosphate hydrolases"/>
    <property type="match status" value="3"/>
</dbReference>
<dbReference type="InterPro" id="IPR003593">
    <property type="entry name" value="AAA+_ATPase"/>
</dbReference>
<dbReference type="InterPro" id="IPR003959">
    <property type="entry name" value="ATPase_AAA_core"/>
</dbReference>
<dbReference type="InterPro" id="IPR017730">
    <property type="entry name" value="Chaperonin_ClpB"/>
</dbReference>
<dbReference type="InterPro" id="IPR019489">
    <property type="entry name" value="Clp_ATPase_C"/>
</dbReference>
<dbReference type="InterPro" id="IPR036628">
    <property type="entry name" value="Clp_N_dom_sf"/>
</dbReference>
<dbReference type="InterPro" id="IPR004176">
    <property type="entry name" value="Clp_R_dom"/>
</dbReference>
<dbReference type="InterPro" id="IPR001270">
    <property type="entry name" value="ClpA/B"/>
</dbReference>
<dbReference type="InterPro" id="IPR018368">
    <property type="entry name" value="ClpA/B_CS1"/>
</dbReference>
<dbReference type="InterPro" id="IPR028299">
    <property type="entry name" value="ClpA/B_CS2"/>
</dbReference>
<dbReference type="InterPro" id="IPR041546">
    <property type="entry name" value="ClpA/ClpB_AAA_lid"/>
</dbReference>
<dbReference type="InterPro" id="IPR050130">
    <property type="entry name" value="ClpA_ClpB"/>
</dbReference>
<dbReference type="InterPro" id="IPR027417">
    <property type="entry name" value="P-loop_NTPase"/>
</dbReference>
<dbReference type="NCBIfam" id="TIGR03346">
    <property type="entry name" value="chaperone_ClpB"/>
    <property type="match status" value="1"/>
</dbReference>
<dbReference type="PANTHER" id="PTHR11638">
    <property type="entry name" value="ATP-DEPENDENT CLP PROTEASE"/>
    <property type="match status" value="1"/>
</dbReference>
<dbReference type="PANTHER" id="PTHR11638:SF18">
    <property type="entry name" value="HEAT SHOCK PROTEIN 104"/>
    <property type="match status" value="1"/>
</dbReference>
<dbReference type="Pfam" id="PF00004">
    <property type="entry name" value="AAA"/>
    <property type="match status" value="1"/>
</dbReference>
<dbReference type="Pfam" id="PF07724">
    <property type="entry name" value="AAA_2"/>
    <property type="match status" value="1"/>
</dbReference>
<dbReference type="Pfam" id="PF17871">
    <property type="entry name" value="AAA_lid_9"/>
    <property type="match status" value="1"/>
</dbReference>
<dbReference type="Pfam" id="PF02861">
    <property type="entry name" value="Clp_N"/>
    <property type="match status" value="2"/>
</dbReference>
<dbReference type="Pfam" id="PF10431">
    <property type="entry name" value="ClpB_D2-small"/>
    <property type="match status" value="1"/>
</dbReference>
<dbReference type="PRINTS" id="PR00300">
    <property type="entry name" value="CLPPROTEASEA"/>
</dbReference>
<dbReference type="SMART" id="SM00382">
    <property type="entry name" value="AAA"/>
    <property type="match status" value="2"/>
</dbReference>
<dbReference type="SMART" id="SM01086">
    <property type="entry name" value="ClpB_D2-small"/>
    <property type="match status" value="1"/>
</dbReference>
<dbReference type="SUPFAM" id="SSF81923">
    <property type="entry name" value="Double Clp-N motif"/>
    <property type="match status" value="1"/>
</dbReference>
<dbReference type="SUPFAM" id="SSF52540">
    <property type="entry name" value="P-loop containing nucleoside triphosphate hydrolases"/>
    <property type="match status" value="2"/>
</dbReference>
<dbReference type="PROSITE" id="PS51903">
    <property type="entry name" value="CLP_R"/>
    <property type="match status" value="1"/>
</dbReference>
<dbReference type="PROSITE" id="PS00870">
    <property type="entry name" value="CLPAB_1"/>
    <property type="match status" value="1"/>
</dbReference>
<dbReference type="PROSITE" id="PS00871">
    <property type="entry name" value="CLPAB_2"/>
    <property type="match status" value="1"/>
</dbReference>
<reference key="1">
    <citation type="journal article" date="2002" name="Proc. Natl. Acad. Sci. U.S.A.">
        <title>The genome sequence of Bifidobacterium longum reflects its adaptation to the human gastrointestinal tract.</title>
        <authorList>
            <person name="Schell M.A."/>
            <person name="Karmirantzou M."/>
            <person name="Snel B."/>
            <person name="Vilanova D."/>
            <person name="Berger B."/>
            <person name="Pessi G."/>
            <person name="Zwahlen M.-C."/>
            <person name="Desiere F."/>
            <person name="Bork P."/>
            <person name="Delley M."/>
            <person name="Pridmore R.D."/>
            <person name="Arigoni F."/>
        </authorList>
    </citation>
    <scope>NUCLEOTIDE SEQUENCE [LARGE SCALE GENOMIC DNA]</scope>
    <source>
        <strain>NCC 2705</strain>
    </source>
</reference>
<sequence>MEQKFTTMAQEAVGDAIQSASAAGNAQVETLHVMDALLRQENGVARSLIEAAGGDPQAIGAAVRNALVALPSASGSSTSQPQASRQLTAAIAQAEKEMQQMGDEYVSTEHLLIGIAASKPNQSAEILEKNGVTAASLRKAVPGVRGGAKVTSPDAEGSYKALEKYSTDLTAAAKEGKLDPVIGRDQEIRRVIQILSRRTKNNPVLIGEPGVGKTAVVEGLAQRIVAGDVPTTLQGKKLISLDLGSMVAGSKYRGEFEERLKSVLNEIKNADGQIITFIDEIHTIVGAGAAEGSMDAGNMLKPMLARGELRLIGATTLDEYRENIEKDPALERRFQQVFVGEPSVEDTIAILRGLKQRYEAHHKVTIGDDALVAAATLSNRYISGRQLPDKAIDLVDEAAAHLRMELDSSPEEIDELQRKVTRLEMEEMQLKKAEDPASKERLGKLQAELADTREKLSGLKARWDAEQAGHNKVGDLRAKLDDLRVQADKYTREGNLAEASKILYGEIPSIQKELAAAESADAESADASAANPADEPMVPDRVDADSVAEIVSDWTGIPVGRLMQGENEKLLHMEDYLGKRVIGQKEAIAAVSDAVRRSRAGISDPNRPTGSFLFLGPTGVGKTELAKALADFLFDDEKAMVRIDMSEYMEKASVSRLIGAAPGYVGYEQGGQLTEAVRRRPYSVVLFDEVEKANPEIFDVLLQVLDDGRLTDGQGRTVDFKNTILIMTSNLGSQFLVNEDMDADAKKKAVMDAVHMNFKPEFLNRLDDIVMFHPLTREELGGIVDIQVAGVSQRLTDRRITLDVTDSAREWLANTGYDPAYGARPLRRLVQTEVGDQLARMLLAGKVHDGDTVLVDQTGGEHLELSAWASDQIVSDNPDVSVDNVTEDK</sequence>
<gene>
    <name type="primary">clpB</name>
    <name type="ordered locus">BL1250</name>
</gene>
<accession>Q8G4X4</accession>
<feature type="chain" id="PRO_0000191094" description="Chaperone protein ClpB">
    <location>
        <begin position="1"/>
        <end position="889"/>
    </location>
</feature>
<feature type="domain" description="Clp R" evidence="2">
    <location>
        <begin position="1"/>
        <end position="147"/>
    </location>
</feature>
<feature type="region of interest" description="Repeat 1" evidence="2">
    <location>
        <begin position="5"/>
        <end position="70"/>
    </location>
</feature>
<feature type="region of interest" description="Repeat 2" evidence="2">
    <location>
        <begin position="83"/>
        <end position="147"/>
    </location>
</feature>
<feature type="region of interest" description="NBD1" evidence="1">
    <location>
        <begin position="160"/>
        <end position="341"/>
    </location>
</feature>
<feature type="region of interest" description="Linker" evidence="1">
    <location>
        <begin position="342"/>
        <end position="556"/>
    </location>
</feature>
<feature type="region of interest" description="Disordered" evidence="3">
    <location>
        <begin position="515"/>
        <end position="539"/>
    </location>
</feature>
<feature type="region of interest" description="NBD2" evidence="1">
    <location>
        <begin position="566"/>
        <end position="774"/>
    </location>
</feature>
<feature type="region of interest" description="C-terminal" evidence="1">
    <location>
        <begin position="775"/>
        <end position="889"/>
    </location>
</feature>
<feature type="coiled-coil region" evidence="1">
    <location>
        <begin position="392"/>
        <end position="526"/>
    </location>
</feature>
<feature type="compositionally biased region" description="Low complexity" evidence="3">
    <location>
        <begin position="525"/>
        <end position="535"/>
    </location>
</feature>
<feature type="binding site" evidence="1">
    <location>
        <begin position="207"/>
        <end position="214"/>
    </location>
    <ligand>
        <name>ATP</name>
        <dbReference type="ChEBI" id="CHEBI:30616"/>
        <label>1</label>
    </ligand>
</feature>
<feature type="binding site" evidence="1">
    <location>
        <begin position="616"/>
        <end position="623"/>
    </location>
    <ligand>
        <name>ATP</name>
        <dbReference type="ChEBI" id="CHEBI:30616"/>
        <label>2</label>
    </ligand>
</feature>
<protein>
    <recommendedName>
        <fullName>Chaperone protein ClpB</fullName>
    </recommendedName>
</protein>
<comment type="function">
    <text evidence="1">Part of a stress-induced multi-chaperone system, it is involved in the recovery of the cell from heat-induced damage, in cooperation with DnaK, DnaJ and GrpE. Acts before DnaK, in the processing of protein aggregates. Protein binding stimulates the ATPase activity; ATP hydrolysis unfolds the denatured protein aggregates, which probably helps expose new hydrophobic binding sites on the surface of ClpB-bound aggregates, contributing to the solubilization and refolding of denatured protein aggregates by DnaK (By similarity).</text>
</comment>
<comment type="subunit">
    <text evidence="1">Homohexamer. The oligomerization is ATP-dependent (By similarity).</text>
</comment>
<comment type="subcellular location">
    <subcellularLocation>
        <location evidence="4">Cytoplasm</location>
    </subcellularLocation>
</comment>
<comment type="domain">
    <text evidence="1">The Clp repeat (R) domain probably functions as a substrate-discriminating domain, recruiting aggregated proteins to the ClpB hexamer and/or stabilizing bound proteins. The NBD2 domain is responsible for oligomerization, whereas the NBD1 domain stabilizes the hexamer probably in an ATP-dependent manner. The movement of the coiled-coil domain is essential for ClpB ability to rescue proteins from an aggregated state, probably by pulling apart large aggregated proteins, which are bound between the coiled-coils motifs of adjacent ClpB subunits in the functional hexamer (By similarity).</text>
</comment>
<comment type="similarity">
    <text evidence="4">Belongs to the ClpA/ClpB family.</text>
</comment>